<reference key="1">
    <citation type="submission" date="2004-11" db="EMBL/GenBank/DDBJ databases">
        <title>GJ31 meta-operon.</title>
        <authorList>
            <person name="Reineke W."/>
            <person name="Kunze M."/>
        </authorList>
    </citation>
    <scope>NUCLEOTIDE SEQUENCE [GENOMIC DNA]</scope>
    <source>
        <strain>GJ31</strain>
    </source>
</reference>
<geneLocation type="plasmid">
    <name>pKW1</name>
</geneLocation>
<gene>
    <name evidence="1" type="primary">mhpD2</name>
    <name type="synonym">cbzJ2</name>
</gene>
<name>MHPD2_PSEPU</name>
<accession>Q49KF9</accession>
<feature type="chain" id="PRO_0000337798" description="2-keto-4-pentenoate hydratase 2">
    <location>
        <begin position="1"/>
        <end position="270"/>
    </location>
</feature>
<protein>
    <recommendedName>
        <fullName evidence="1">2-keto-4-pentenoate hydratase 2</fullName>
        <ecNumber evidence="1">4.2.1.80</ecNumber>
    </recommendedName>
    <alternativeName>
        <fullName evidence="1">2-hydroxypentadienoic acid hydratase 2</fullName>
    </alternativeName>
</protein>
<proteinExistence type="inferred from homology"/>
<evidence type="ECO:0000255" key="1">
    <source>
        <dbReference type="HAMAP-Rule" id="MF_01655"/>
    </source>
</evidence>
<sequence length="270" mass="28504">MNTSQETLERLAAELRKAEGKGEPVGPLRDVIGATNVEHAYAIQRLNQAYAIANGRRLVGRKIGLTNPKVQAQLGVDQPDFGCLFADMAYGDNEVIPFERVLQPKIEAEIALILERDLPSASTTFADVIAATGWVVPALEVVGSRIEGWNIKFADTVADNASSGCFVLGGPARRIDGLDLRGATMRMSKNGEVVSSGSGGECLGNPLNAAVWLARTMAEFGEPLKAGDIILTGALGPMVGVSAGDHFEAEIEGLGRVGVSFSVDVTEVLK</sequence>
<comment type="function">
    <text evidence="1">Catalyzes the conversion of 2-hydroxypentadienoic acid (enolic form of 2-oxopent-4-enoate) to 4-hydroxy-2-ketopentanoic acid.</text>
</comment>
<comment type="catalytic activity">
    <reaction evidence="1">
        <text>(S)-4-hydroxy-2-oxopentanoate = (2Z)-2-hydroxypenta-2,4-dienoate + H2O</text>
        <dbReference type="Rhea" id="RHEA:22580"/>
        <dbReference type="ChEBI" id="CHEBI:15377"/>
        <dbReference type="ChEBI" id="CHEBI:67152"/>
        <dbReference type="ChEBI" id="CHEBI:73143"/>
        <dbReference type="EC" id="4.2.1.80"/>
    </reaction>
</comment>
<comment type="cofactor">
    <cofactor evidence="1">
        <name>a divalent metal cation</name>
        <dbReference type="ChEBI" id="CHEBI:60240"/>
    </cofactor>
</comment>
<comment type="pathway">
    <text evidence="1">Aromatic compound metabolism; 3-phenylpropanoate degradation.</text>
</comment>
<comment type="similarity">
    <text evidence="1">Belongs to the hydratase/decarboxylase family. MhpD subfamily.</text>
</comment>
<organism>
    <name type="scientific">Pseudomonas putida</name>
    <name type="common">Arthrobacter siderocapsulatus</name>
    <dbReference type="NCBI Taxonomy" id="303"/>
    <lineage>
        <taxon>Bacteria</taxon>
        <taxon>Pseudomonadati</taxon>
        <taxon>Pseudomonadota</taxon>
        <taxon>Gammaproteobacteria</taxon>
        <taxon>Pseudomonadales</taxon>
        <taxon>Pseudomonadaceae</taxon>
        <taxon>Pseudomonas</taxon>
    </lineage>
</organism>
<keyword id="KW-0058">Aromatic hydrocarbons catabolism</keyword>
<keyword id="KW-0456">Lyase</keyword>
<keyword id="KW-0614">Plasmid</keyword>
<dbReference type="EC" id="4.2.1.80" evidence="1"/>
<dbReference type="EMBL" id="AY831461">
    <property type="protein sequence ID" value="AAX50132.1"/>
    <property type="molecule type" value="Genomic_DNA"/>
</dbReference>
<dbReference type="SMR" id="Q49KF9"/>
<dbReference type="UniPathway" id="UPA00714"/>
<dbReference type="GO" id="GO:0005737">
    <property type="term" value="C:cytoplasm"/>
    <property type="evidence" value="ECO:0007669"/>
    <property type="project" value="TreeGrafter"/>
</dbReference>
<dbReference type="GO" id="GO:0008684">
    <property type="term" value="F:2-oxopent-4-enoate hydratase activity"/>
    <property type="evidence" value="ECO:0007669"/>
    <property type="project" value="UniProtKB-UniRule"/>
</dbReference>
<dbReference type="GO" id="GO:0030145">
    <property type="term" value="F:manganese ion binding"/>
    <property type="evidence" value="ECO:0007669"/>
    <property type="project" value="InterPro"/>
</dbReference>
<dbReference type="GO" id="GO:0019380">
    <property type="term" value="P:3-phenylpropionate catabolic process"/>
    <property type="evidence" value="ECO:0007669"/>
    <property type="project" value="UniProtKB-UniRule"/>
</dbReference>
<dbReference type="Gene3D" id="3.90.850.10">
    <property type="entry name" value="Fumarylacetoacetase-like, C-terminal domain"/>
    <property type="match status" value="1"/>
</dbReference>
<dbReference type="HAMAP" id="MF_01655">
    <property type="entry name" value="MhpD"/>
    <property type="match status" value="1"/>
</dbReference>
<dbReference type="InterPro" id="IPR011234">
    <property type="entry name" value="Fumarylacetoacetase-like_C"/>
</dbReference>
<dbReference type="InterPro" id="IPR036663">
    <property type="entry name" value="Fumarylacetoacetase_C_sf"/>
</dbReference>
<dbReference type="InterPro" id="IPR050772">
    <property type="entry name" value="Hydratase-Decarb/MhpD_sf"/>
</dbReference>
<dbReference type="InterPro" id="IPR023793">
    <property type="entry name" value="Keto_pentenoate-hydratase"/>
</dbReference>
<dbReference type="NCBIfam" id="NF008461">
    <property type="entry name" value="PRK11342.1"/>
    <property type="match status" value="1"/>
</dbReference>
<dbReference type="PANTHER" id="PTHR30143:SF0">
    <property type="entry name" value="2-KETO-4-PENTENOATE HYDRATASE"/>
    <property type="match status" value="1"/>
</dbReference>
<dbReference type="PANTHER" id="PTHR30143">
    <property type="entry name" value="ACID HYDRATASE"/>
    <property type="match status" value="1"/>
</dbReference>
<dbReference type="Pfam" id="PF01557">
    <property type="entry name" value="FAA_hydrolase"/>
    <property type="match status" value="1"/>
</dbReference>
<dbReference type="SUPFAM" id="SSF56529">
    <property type="entry name" value="FAH"/>
    <property type="match status" value="1"/>
</dbReference>